<gene>
    <name evidence="1" type="primary">lipB</name>
    <name type="ordered locus">XC_0712</name>
</gene>
<reference key="1">
    <citation type="journal article" date="2005" name="Genome Res.">
        <title>Comparative and functional genomic analyses of the pathogenicity of phytopathogen Xanthomonas campestris pv. campestris.</title>
        <authorList>
            <person name="Qian W."/>
            <person name="Jia Y."/>
            <person name="Ren S.-X."/>
            <person name="He Y.-Q."/>
            <person name="Feng J.-X."/>
            <person name="Lu L.-F."/>
            <person name="Sun Q."/>
            <person name="Ying G."/>
            <person name="Tang D.-J."/>
            <person name="Tang H."/>
            <person name="Wu W."/>
            <person name="Hao P."/>
            <person name="Wang L."/>
            <person name="Jiang B.-L."/>
            <person name="Zeng S."/>
            <person name="Gu W.-Y."/>
            <person name="Lu G."/>
            <person name="Rong L."/>
            <person name="Tian Y."/>
            <person name="Yao Z."/>
            <person name="Fu G."/>
            <person name="Chen B."/>
            <person name="Fang R."/>
            <person name="Qiang B."/>
            <person name="Chen Z."/>
            <person name="Zhao G.-P."/>
            <person name="Tang J.-L."/>
            <person name="He C."/>
        </authorList>
    </citation>
    <scope>NUCLEOTIDE SEQUENCE [LARGE SCALE GENOMIC DNA]</scope>
    <source>
        <strain>8004</strain>
    </source>
</reference>
<sequence length="232" mass="25274">MDAVAAEPVVAPVLPLPAQVRDLGMQDYAPVWRAMQRFTDTRDEHTGDELWVVEHTPVFTLGQAGKPEHVLAPGEIPVLQVDRGGQVTYHGPGQLVVYPLLDLRRLKIGVRDYVCKIEQALIDTLDEWNIVAERRDGAPGVYVGGAKIAALGIRVRRGCTFHGLSFNVAMDLEPFHRINPCGYQDLQVTSVLDLGGPSGMDAVKAVLLDQLARQFGLVLQPTSALPDLSLPA</sequence>
<organism>
    <name type="scientific">Xanthomonas campestris pv. campestris (strain 8004)</name>
    <dbReference type="NCBI Taxonomy" id="314565"/>
    <lineage>
        <taxon>Bacteria</taxon>
        <taxon>Pseudomonadati</taxon>
        <taxon>Pseudomonadota</taxon>
        <taxon>Gammaproteobacteria</taxon>
        <taxon>Lysobacterales</taxon>
        <taxon>Lysobacteraceae</taxon>
        <taxon>Xanthomonas</taxon>
    </lineage>
</organism>
<dbReference type="EC" id="2.3.1.181" evidence="1"/>
<dbReference type="EMBL" id="CP000050">
    <property type="protein sequence ID" value="AAY47790.1"/>
    <property type="molecule type" value="Genomic_DNA"/>
</dbReference>
<dbReference type="RefSeq" id="WP_011038550.1">
    <property type="nucleotide sequence ID" value="NZ_CP155948.1"/>
</dbReference>
<dbReference type="SMR" id="Q4UYT3"/>
<dbReference type="KEGG" id="xcb:XC_0712"/>
<dbReference type="HOGENOM" id="CLU_035168_3_1_6"/>
<dbReference type="UniPathway" id="UPA00538">
    <property type="reaction ID" value="UER00592"/>
</dbReference>
<dbReference type="Proteomes" id="UP000000420">
    <property type="component" value="Chromosome"/>
</dbReference>
<dbReference type="GO" id="GO:0005737">
    <property type="term" value="C:cytoplasm"/>
    <property type="evidence" value="ECO:0007669"/>
    <property type="project" value="UniProtKB-SubCell"/>
</dbReference>
<dbReference type="GO" id="GO:0033819">
    <property type="term" value="F:lipoyl(octanoyl) transferase activity"/>
    <property type="evidence" value="ECO:0007669"/>
    <property type="project" value="UniProtKB-EC"/>
</dbReference>
<dbReference type="GO" id="GO:0036211">
    <property type="term" value="P:protein modification process"/>
    <property type="evidence" value="ECO:0007669"/>
    <property type="project" value="InterPro"/>
</dbReference>
<dbReference type="CDD" id="cd16444">
    <property type="entry name" value="LipB"/>
    <property type="match status" value="1"/>
</dbReference>
<dbReference type="FunFam" id="3.30.930.10:FF:000020">
    <property type="entry name" value="Octanoyltransferase"/>
    <property type="match status" value="1"/>
</dbReference>
<dbReference type="Gene3D" id="3.30.930.10">
    <property type="entry name" value="Bira Bifunctional Protein, Domain 2"/>
    <property type="match status" value="1"/>
</dbReference>
<dbReference type="HAMAP" id="MF_00013">
    <property type="entry name" value="LipB"/>
    <property type="match status" value="1"/>
</dbReference>
<dbReference type="InterPro" id="IPR045864">
    <property type="entry name" value="aa-tRNA-synth_II/BPL/LPL"/>
</dbReference>
<dbReference type="InterPro" id="IPR004143">
    <property type="entry name" value="BPL_LPL_catalytic"/>
</dbReference>
<dbReference type="InterPro" id="IPR000544">
    <property type="entry name" value="Octanoyltransferase"/>
</dbReference>
<dbReference type="InterPro" id="IPR020605">
    <property type="entry name" value="Octanoyltransferase_CS"/>
</dbReference>
<dbReference type="NCBIfam" id="TIGR00214">
    <property type="entry name" value="lipB"/>
    <property type="match status" value="1"/>
</dbReference>
<dbReference type="NCBIfam" id="NF010922">
    <property type="entry name" value="PRK14342.1"/>
    <property type="match status" value="1"/>
</dbReference>
<dbReference type="NCBIfam" id="NF010925">
    <property type="entry name" value="PRK14345.1"/>
    <property type="match status" value="1"/>
</dbReference>
<dbReference type="PANTHER" id="PTHR10993:SF7">
    <property type="entry name" value="LIPOYLTRANSFERASE 2, MITOCHONDRIAL-RELATED"/>
    <property type="match status" value="1"/>
</dbReference>
<dbReference type="PANTHER" id="PTHR10993">
    <property type="entry name" value="OCTANOYLTRANSFERASE"/>
    <property type="match status" value="1"/>
</dbReference>
<dbReference type="Pfam" id="PF21948">
    <property type="entry name" value="LplA-B_cat"/>
    <property type="match status" value="1"/>
</dbReference>
<dbReference type="PIRSF" id="PIRSF016262">
    <property type="entry name" value="LPLase"/>
    <property type="match status" value="1"/>
</dbReference>
<dbReference type="SUPFAM" id="SSF55681">
    <property type="entry name" value="Class II aaRS and biotin synthetases"/>
    <property type="match status" value="1"/>
</dbReference>
<dbReference type="PROSITE" id="PS51733">
    <property type="entry name" value="BPL_LPL_CATALYTIC"/>
    <property type="match status" value="1"/>
</dbReference>
<dbReference type="PROSITE" id="PS01313">
    <property type="entry name" value="LIPB"/>
    <property type="match status" value="1"/>
</dbReference>
<evidence type="ECO:0000255" key="1">
    <source>
        <dbReference type="HAMAP-Rule" id="MF_00013"/>
    </source>
</evidence>
<evidence type="ECO:0000255" key="2">
    <source>
        <dbReference type="PROSITE-ProRule" id="PRU01067"/>
    </source>
</evidence>
<protein>
    <recommendedName>
        <fullName evidence="1">Octanoyltransferase</fullName>
        <ecNumber evidence="1">2.3.1.181</ecNumber>
    </recommendedName>
    <alternativeName>
        <fullName evidence="1">Lipoate-protein ligase B</fullName>
    </alternativeName>
    <alternativeName>
        <fullName evidence="1">Lipoyl/octanoyl transferase</fullName>
    </alternativeName>
    <alternativeName>
        <fullName evidence="1">Octanoyl-[acyl-carrier-protein]-protein N-octanoyltransferase</fullName>
    </alternativeName>
</protein>
<comment type="function">
    <text evidence="1">Catalyzes the transfer of endogenously produced octanoic acid from octanoyl-acyl-carrier-protein onto the lipoyl domains of lipoate-dependent enzymes. Lipoyl-ACP can also act as a substrate although octanoyl-ACP is likely to be the physiological substrate.</text>
</comment>
<comment type="catalytic activity">
    <reaction evidence="1">
        <text>octanoyl-[ACP] + L-lysyl-[protein] = N(6)-octanoyl-L-lysyl-[protein] + holo-[ACP] + H(+)</text>
        <dbReference type="Rhea" id="RHEA:17665"/>
        <dbReference type="Rhea" id="RHEA-COMP:9636"/>
        <dbReference type="Rhea" id="RHEA-COMP:9685"/>
        <dbReference type="Rhea" id="RHEA-COMP:9752"/>
        <dbReference type="Rhea" id="RHEA-COMP:9928"/>
        <dbReference type="ChEBI" id="CHEBI:15378"/>
        <dbReference type="ChEBI" id="CHEBI:29969"/>
        <dbReference type="ChEBI" id="CHEBI:64479"/>
        <dbReference type="ChEBI" id="CHEBI:78463"/>
        <dbReference type="ChEBI" id="CHEBI:78809"/>
        <dbReference type="EC" id="2.3.1.181"/>
    </reaction>
</comment>
<comment type="pathway">
    <text evidence="1">Protein modification; protein lipoylation via endogenous pathway; protein N(6)-(lipoyl)lysine from octanoyl-[acyl-carrier-protein]: step 1/2.</text>
</comment>
<comment type="subcellular location">
    <subcellularLocation>
        <location evidence="1">Cytoplasm</location>
    </subcellularLocation>
</comment>
<comment type="miscellaneous">
    <text evidence="1">In the reaction, the free carboxyl group of octanoic acid is attached via an amide linkage to the epsilon-amino group of a specific lysine residue of lipoyl domains of lipoate-dependent enzymes.</text>
</comment>
<comment type="similarity">
    <text evidence="1">Belongs to the LipB family.</text>
</comment>
<proteinExistence type="inferred from homology"/>
<feature type="chain" id="PRO_0000242781" description="Octanoyltransferase">
    <location>
        <begin position="1"/>
        <end position="232"/>
    </location>
</feature>
<feature type="domain" description="BPL/LPL catalytic" evidence="2">
    <location>
        <begin position="44"/>
        <end position="219"/>
    </location>
</feature>
<feature type="active site" description="Acyl-thioester intermediate" evidence="1">
    <location>
        <position position="181"/>
    </location>
</feature>
<feature type="binding site" evidence="1">
    <location>
        <begin position="83"/>
        <end position="90"/>
    </location>
    <ligand>
        <name>substrate</name>
    </ligand>
</feature>
<feature type="binding site" evidence="1">
    <location>
        <begin position="150"/>
        <end position="152"/>
    </location>
    <ligand>
        <name>substrate</name>
    </ligand>
</feature>
<feature type="binding site" evidence="1">
    <location>
        <begin position="163"/>
        <end position="165"/>
    </location>
    <ligand>
        <name>substrate</name>
    </ligand>
</feature>
<feature type="site" description="Lowers pKa of active site Cys" evidence="1">
    <location>
        <position position="147"/>
    </location>
</feature>
<accession>Q4UYT3</accession>
<name>LIPB_XANC8</name>
<keyword id="KW-0012">Acyltransferase</keyword>
<keyword id="KW-0963">Cytoplasm</keyword>
<keyword id="KW-0808">Transferase</keyword>